<feature type="chain" id="PRO_0000052836" description="Hemoglobin subunit alpha-D">
    <location>
        <begin position="1"/>
        <end position="141"/>
    </location>
</feature>
<feature type="domain" description="Globin" evidence="1">
    <location>
        <begin position="1"/>
        <end position="141"/>
    </location>
</feature>
<feature type="binding site" description="distal binding residue">
    <location>
        <position position="58"/>
    </location>
    <ligand>
        <name>heme b</name>
        <dbReference type="ChEBI" id="CHEBI:60344"/>
    </ligand>
    <ligandPart>
        <name>Fe</name>
        <dbReference type="ChEBI" id="CHEBI:18248"/>
    </ligandPart>
</feature>
<feature type="binding site" description="proximal binding residue">
    <location>
        <position position="87"/>
    </location>
    <ligand>
        <name>heme b</name>
        <dbReference type="ChEBI" id="CHEBI:60344"/>
    </ligand>
    <ligandPart>
        <name>Fe</name>
        <dbReference type="ChEBI" id="CHEBI:18248"/>
    </ligandPart>
</feature>
<sequence length="141" mass="15736">MLNAEDKKLIQQAWEKAASHQQEFGAEALVRMFTAYPQTKTYFPHFDLSPGSDQIRGHGKKVLGALSNAVKNVDNLSQAMSELSNLHAYNLRVDPVNFKLLSQCIEVVLAVHMGKDYTPEVHAAFDKFLSAVSAVLAEKYR</sequence>
<comment type="function">
    <text>Involved in oxygen transport from the lung to the various peripheral tissues.</text>
</comment>
<comment type="subunit">
    <text>Heterotetramer of two alpha-D chains and two beta chains.</text>
</comment>
<comment type="tissue specificity">
    <text>Red blood cells.</text>
</comment>
<comment type="developmental stage">
    <text>In birds, the alpha-D chain occurs in a minor hemoglobin component, called hemoglobin d, which is expressed in late embryonic and adult life.</text>
</comment>
<comment type="similarity">
    <text evidence="1">Belongs to the globin family.</text>
</comment>
<organism>
    <name type="scientific">Phasianus colchicus colchicus</name>
    <name type="common">Black-necked pheasant</name>
    <dbReference type="NCBI Taxonomy" id="9057"/>
    <lineage>
        <taxon>Eukaryota</taxon>
        <taxon>Metazoa</taxon>
        <taxon>Chordata</taxon>
        <taxon>Craniata</taxon>
        <taxon>Vertebrata</taxon>
        <taxon>Euteleostomi</taxon>
        <taxon>Archelosauria</taxon>
        <taxon>Archosauria</taxon>
        <taxon>Dinosauria</taxon>
        <taxon>Saurischia</taxon>
        <taxon>Theropoda</taxon>
        <taxon>Coelurosauria</taxon>
        <taxon>Aves</taxon>
        <taxon>Neognathae</taxon>
        <taxon>Galloanserae</taxon>
        <taxon>Galliformes</taxon>
        <taxon>Phasianidae</taxon>
        <taxon>Phasianinae</taxon>
        <taxon>Phasianus</taxon>
    </lineage>
</organism>
<dbReference type="PIR" id="A02323">
    <property type="entry name" value="HAFEDR"/>
</dbReference>
<dbReference type="SMR" id="P02002"/>
<dbReference type="GO" id="GO:0072562">
    <property type="term" value="C:blood microparticle"/>
    <property type="evidence" value="ECO:0007669"/>
    <property type="project" value="TreeGrafter"/>
</dbReference>
<dbReference type="GO" id="GO:0031838">
    <property type="term" value="C:haptoglobin-hemoglobin complex"/>
    <property type="evidence" value="ECO:0007669"/>
    <property type="project" value="TreeGrafter"/>
</dbReference>
<dbReference type="GO" id="GO:0005833">
    <property type="term" value="C:hemoglobin complex"/>
    <property type="evidence" value="ECO:0007669"/>
    <property type="project" value="InterPro"/>
</dbReference>
<dbReference type="GO" id="GO:0031720">
    <property type="term" value="F:haptoglobin binding"/>
    <property type="evidence" value="ECO:0007669"/>
    <property type="project" value="TreeGrafter"/>
</dbReference>
<dbReference type="GO" id="GO:0020037">
    <property type="term" value="F:heme binding"/>
    <property type="evidence" value="ECO:0007669"/>
    <property type="project" value="InterPro"/>
</dbReference>
<dbReference type="GO" id="GO:0046872">
    <property type="term" value="F:metal ion binding"/>
    <property type="evidence" value="ECO:0007669"/>
    <property type="project" value="UniProtKB-KW"/>
</dbReference>
<dbReference type="GO" id="GO:0043177">
    <property type="term" value="F:organic acid binding"/>
    <property type="evidence" value="ECO:0007669"/>
    <property type="project" value="TreeGrafter"/>
</dbReference>
<dbReference type="GO" id="GO:0019825">
    <property type="term" value="F:oxygen binding"/>
    <property type="evidence" value="ECO:0007669"/>
    <property type="project" value="InterPro"/>
</dbReference>
<dbReference type="GO" id="GO:0005344">
    <property type="term" value="F:oxygen carrier activity"/>
    <property type="evidence" value="ECO:0007669"/>
    <property type="project" value="UniProtKB-KW"/>
</dbReference>
<dbReference type="GO" id="GO:0004601">
    <property type="term" value="F:peroxidase activity"/>
    <property type="evidence" value="ECO:0007669"/>
    <property type="project" value="TreeGrafter"/>
</dbReference>
<dbReference type="GO" id="GO:0042744">
    <property type="term" value="P:hydrogen peroxide catabolic process"/>
    <property type="evidence" value="ECO:0007669"/>
    <property type="project" value="TreeGrafter"/>
</dbReference>
<dbReference type="CDD" id="cd08927">
    <property type="entry name" value="Hb-alpha-like"/>
    <property type="match status" value="1"/>
</dbReference>
<dbReference type="FunFam" id="1.10.490.10:FF:000002">
    <property type="entry name" value="Hemoglobin subunit alpha"/>
    <property type="match status" value="1"/>
</dbReference>
<dbReference type="Gene3D" id="1.10.490.10">
    <property type="entry name" value="Globins"/>
    <property type="match status" value="1"/>
</dbReference>
<dbReference type="InterPro" id="IPR000971">
    <property type="entry name" value="Globin"/>
</dbReference>
<dbReference type="InterPro" id="IPR009050">
    <property type="entry name" value="Globin-like_sf"/>
</dbReference>
<dbReference type="InterPro" id="IPR012292">
    <property type="entry name" value="Globin/Proto"/>
</dbReference>
<dbReference type="InterPro" id="IPR002338">
    <property type="entry name" value="Hemoglobin_a-typ"/>
</dbReference>
<dbReference type="InterPro" id="IPR050056">
    <property type="entry name" value="Hemoglobin_oxygen_transport"/>
</dbReference>
<dbReference type="PANTHER" id="PTHR11442">
    <property type="entry name" value="HEMOGLOBIN FAMILY MEMBER"/>
    <property type="match status" value="1"/>
</dbReference>
<dbReference type="PANTHER" id="PTHR11442:SF41">
    <property type="entry name" value="HEMOGLOBIN SUBUNIT ZETA"/>
    <property type="match status" value="1"/>
</dbReference>
<dbReference type="Pfam" id="PF00042">
    <property type="entry name" value="Globin"/>
    <property type="match status" value="1"/>
</dbReference>
<dbReference type="PRINTS" id="PR00612">
    <property type="entry name" value="ALPHAHAEM"/>
</dbReference>
<dbReference type="SUPFAM" id="SSF46458">
    <property type="entry name" value="Globin-like"/>
    <property type="match status" value="1"/>
</dbReference>
<dbReference type="PROSITE" id="PS01033">
    <property type="entry name" value="GLOBIN"/>
    <property type="match status" value="1"/>
</dbReference>
<evidence type="ECO:0000255" key="1">
    <source>
        <dbReference type="PROSITE-ProRule" id="PRU00238"/>
    </source>
</evidence>
<protein>
    <recommendedName>
        <fullName>Hemoglobin subunit alpha-D</fullName>
    </recommendedName>
    <alternativeName>
        <fullName>Alpha-D-globin</fullName>
    </alternativeName>
    <alternativeName>
        <fullName>Hemoglobin alpha-D chain</fullName>
    </alternativeName>
</protein>
<accession>P02002</accession>
<gene>
    <name type="primary">HBAD</name>
</gene>
<proteinExistence type="evidence at protein level"/>
<reference key="1">
    <citation type="journal article" date="1982" name="Hoppe-Seyler's Z. Physiol. Chem.">
        <title>Hemoglobins, XLV. The amino acid sequence of pheasant (Phasianus colchicus colchicus) hemoglobins.</title>
        <authorList>
            <person name="Braunitzer G."/>
            <person name="Godovac J."/>
        </authorList>
    </citation>
    <scope>PROTEIN SEQUENCE</scope>
</reference>
<keyword id="KW-0903">Direct protein sequencing</keyword>
<keyword id="KW-0349">Heme</keyword>
<keyword id="KW-0408">Iron</keyword>
<keyword id="KW-0479">Metal-binding</keyword>
<keyword id="KW-0561">Oxygen transport</keyword>
<keyword id="KW-0813">Transport</keyword>
<name>HBAD_PHACO</name>